<sequence length="172" mass="18025">MSKVTFRADDDLVAAVEDLDASKSEVMRNALRAYLTTHAAADDVPVESVNTPVRGAATDAQKDVNVTIRVSSPSAVEEVRTTPASGGRADAEEPGDDGETDAEHADTSATGDESVCSQCGAELSADHVYCPNCGGKATHRVFCECGDEIRADWAFCPRCGRRTVSGDALDSA</sequence>
<evidence type="ECO:0000255" key="1"/>
<evidence type="ECO:0000256" key="2">
    <source>
        <dbReference type="SAM" id="MobiDB-lite"/>
    </source>
</evidence>
<evidence type="ECO:0000269" key="3">
    <source>
    </source>
</evidence>
<evidence type="ECO:0000303" key="4">
    <source>
    </source>
</evidence>
<evidence type="ECO:0000305" key="5"/>
<evidence type="ECO:0000312" key="6">
    <source>
        <dbReference type="EMBL" id="AAG18806.1"/>
    </source>
</evidence>
<evidence type="ECO:0000312" key="7">
    <source>
        <dbReference type="EMBL" id="DAC77493.1"/>
    </source>
</evidence>
<dbReference type="EMBL" id="AE004437">
    <property type="protein sequence ID" value="AAG18806.1"/>
    <property type="status" value="ALT_INIT"/>
    <property type="molecule type" value="Genomic_DNA"/>
</dbReference>
<dbReference type="EMBL" id="BK010829">
    <property type="protein sequence ID" value="DAC77493.1"/>
    <property type="molecule type" value="Genomic_DNA"/>
</dbReference>
<dbReference type="PIR" id="B84180">
    <property type="entry name" value="B84180"/>
</dbReference>
<dbReference type="RefSeq" id="WP_012289117.1">
    <property type="nucleotide sequence ID" value="NC_002607.1"/>
</dbReference>
<dbReference type="STRING" id="64091.VNG_0195H"/>
<dbReference type="PaxDb" id="64091-VNG_0195H"/>
<dbReference type="KEGG" id="hal:VNG_0195H"/>
<dbReference type="PATRIC" id="fig|64091.14.peg.143"/>
<dbReference type="HOGENOM" id="CLU_098526_0_0_2"/>
<dbReference type="InParanoid" id="Q9HSJ8"/>
<dbReference type="OrthoDB" id="11143at2157"/>
<dbReference type="Proteomes" id="UP000000554">
    <property type="component" value="Chromosome"/>
</dbReference>
<dbReference type="GO" id="GO:0005737">
    <property type="term" value="C:cytoplasm"/>
    <property type="evidence" value="ECO:0007669"/>
    <property type="project" value="UniProtKB-SubCell"/>
</dbReference>
<dbReference type="GO" id="GO:0003677">
    <property type="term" value="F:DNA binding"/>
    <property type="evidence" value="ECO:0007669"/>
    <property type="project" value="UniProtKB-KW"/>
</dbReference>
<dbReference type="GO" id="GO:0008270">
    <property type="term" value="F:zinc ion binding"/>
    <property type="evidence" value="ECO:0007669"/>
    <property type="project" value="UniProtKB-KW"/>
</dbReference>
<dbReference type="GO" id="GO:0051301">
    <property type="term" value="P:cell division"/>
    <property type="evidence" value="ECO:0007669"/>
    <property type="project" value="UniProtKB-KW"/>
</dbReference>
<dbReference type="InterPro" id="IPR025874">
    <property type="entry name" value="DZR"/>
</dbReference>
<dbReference type="Pfam" id="PF12773">
    <property type="entry name" value="DZR"/>
    <property type="match status" value="1"/>
</dbReference>
<name>CDRL_HALSA</name>
<gene>
    <name evidence="4" type="primary">cdrL</name>
    <name type="ordered locus">VNG_0195H</name>
</gene>
<reference evidence="6" key="1">
    <citation type="journal article" date="2000" name="Proc. Natl. Acad. Sci. U.S.A.">
        <title>Genome sequence of Halobacterium species NRC-1.</title>
        <authorList>
            <person name="Ng W.V."/>
            <person name="Kennedy S.P."/>
            <person name="Mahairas G.G."/>
            <person name="Berquist B."/>
            <person name="Pan M."/>
            <person name="Shukla H.D."/>
            <person name="Lasky S.R."/>
            <person name="Baliga N.S."/>
            <person name="Thorsson V."/>
            <person name="Sbrogna J."/>
            <person name="Swartzell S."/>
            <person name="Weir D."/>
            <person name="Hall J."/>
            <person name="Dahl T.A."/>
            <person name="Welti R."/>
            <person name="Goo Y.A."/>
            <person name="Leithauser B."/>
            <person name="Keller K."/>
            <person name="Cruz R."/>
            <person name="Danson M.J."/>
            <person name="Hough D.W."/>
            <person name="Maddocks D.G."/>
            <person name="Jablonski P.E."/>
            <person name="Krebs M.P."/>
            <person name="Angevine C.M."/>
            <person name="Dale H."/>
            <person name="Isenbarger T.A."/>
            <person name="Peck R.F."/>
            <person name="Pohlschroder M."/>
            <person name="Spudich J.L."/>
            <person name="Jung K.-H."/>
            <person name="Alam M."/>
            <person name="Freitas T."/>
            <person name="Hou S."/>
            <person name="Daniels C.J."/>
            <person name="Dennis P.P."/>
            <person name="Omer A.D."/>
            <person name="Ebhardt H."/>
            <person name="Lowe T.M."/>
            <person name="Liang P."/>
            <person name="Riley M."/>
            <person name="Hood L."/>
            <person name="DasSarma S."/>
        </authorList>
    </citation>
    <scope>NUCLEOTIDE SEQUENCE [LARGE SCALE GENOMIC DNA]</scope>
    <source>
        <strain>ATCC 700922 / JCM 11081 / NRC-1</strain>
    </source>
</reference>
<reference evidence="7" key="2">
    <citation type="journal article" date="2019" name="Microbiol. Resour. Announc.">
        <title>The Genome Sequence of the Halobacterium salinarum Type Strain Is Closely Related to That of Laboratory Strains NRC-1 and R1.</title>
        <authorList>
            <person name="Pfeiffer F."/>
            <person name="Marchfelder A."/>
            <person name="Habermann B."/>
            <person name="Dyall-Smith M.L."/>
        </authorList>
    </citation>
    <scope>GENOME REANNOTATION</scope>
    <source>
        <strain>ATCC 700922 / JCM 11081 / NRC-1</strain>
    </source>
</reference>
<reference key="3">
    <citation type="journal article" date="2020" name="MBio">
        <title>The Ribbon-Helix-Helix Domain Protein CdrS Regulates the Tubulin Homolog ftsZ2 To Control Cell Division in Archaea.</title>
        <authorList>
            <person name="Darnell C.L."/>
            <person name="Zheng J."/>
            <person name="Wilson S."/>
            <person name="Bertoli R.M."/>
            <person name="Bisson-Filho A.W."/>
            <person name="Garner E.C."/>
            <person name="Schmid A.K."/>
        </authorList>
    </citation>
    <scope>FUNCTION</scope>
    <scope>DNA-BINDING</scope>
    <source>
        <strain>ATCC 700922 / JCM 11081 / NRC-1</strain>
    </source>
</reference>
<accession>Q9HSJ8</accession>
<accession>A0A510N455</accession>
<proteinExistence type="evidence at protein level"/>
<protein>
    <recommendedName>
        <fullName evidence="5">Transcriptional regulator CdrL</fullName>
    </recommendedName>
    <alternativeName>
        <fullName evidence="4">Cell division regulator long</fullName>
    </alternativeName>
    <alternativeName>
        <fullName>Double zinc ribbon protein VNG_0195H</fullName>
    </alternativeName>
</protein>
<organism>
    <name type="scientific">Halobacterium salinarum (strain ATCC 700922 / JCM 11081 / NRC-1)</name>
    <name type="common">Halobacterium halobium</name>
    <dbReference type="NCBI Taxonomy" id="64091"/>
    <lineage>
        <taxon>Archaea</taxon>
        <taxon>Methanobacteriati</taxon>
        <taxon>Methanobacteriota</taxon>
        <taxon>Stenosarchaea group</taxon>
        <taxon>Halobacteria</taxon>
        <taxon>Halobacteriales</taxon>
        <taxon>Halobacteriaceae</taxon>
        <taxon>Halobacterium</taxon>
        <taxon>Halobacterium salinarum NRC-34001</taxon>
    </lineage>
</organism>
<feature type="chain" id="PRO_0000431694" description="Transcriptional regulator CdrL">
    <location>
        <begin position="1"/>
        <end position="172"/>
    </location>
</feature>
<feature type="zinc finger region" description="DZANK-type" evidence="1">
    <location>
        <begin position="116"/>
        <end position="160"/>
    </location>
</feature>
<feature type="region of interest" description="Disordered" evidence="2">
    <location>
        <begin position="72"/>
        <end position="113"/>
    </location>
</feature>
<keyword id="KW-0131">Cell cycle</keyword>
<keyword id="KW-0132">Cell division</keyword>
<keyword id="KW-0963">Cytoplasm</keyword>
<keyword id="KW-0238">DNA-binding</keyword>
<keyword id="KW-0479">Metal-binding</keyword>
<keyword id="KW-1185">Reference proteome</keyword>
<keyword id="KW-0804">Transcription</keyword>
<keyword id="KW-0805">Transcription regulation</keyword>
<keyword id="KW-0862">Zinc</keyword>
<keyword id="KW-0863">Zinc-finger</keyword>
<comment type="function">
    <text evidence="3">Transcriptional regulator involved in the control of cell division (PubMed:32788376). Is a specific and direct regulator of the cdrS-ftsZ2 operon (PubMed:32788376). Acts by binding to the promoter region upstream of the operon (PubMed:32788376). The CdrSL-FtsZ2 transcriptional network might coordinate cell division timing with cell growth (PubMed:32788376).</text>
</comment>
<comment type="subcellular location">
    <subcellularLocation>
        <location evidence="5">Cytoplasm</location>
    </subcellularLocation>
</comment>
<comment type="similarity">
    <text evidence="5">Belongs to the CdrL family.</text>
</comment>
<comment type="sequence caution" evidence="5">
    <conflict type="erroneous initiation">
        <sequence resource="EMBL-CDS" id="AAG18806"/>
    </conflict>
    <text>Truncated N-terminus.</text>
</comment>